<evidence type="ECO:0000250" key="1"/>
<evidence type="ECO:0000255" key="2"/>
<evidence type="ECO:0000305" key="3"/>
<proteinExistence type="inferred from homology"/>
<protein>
    <recommendedName>
        <fullName>Probable urea active transporter 3</fullName>
    </recommendedName>
</protein>
<accession>Q9URY6</accession>
<dbReference type="EMBL" id="CU329670">
    <property type="protein sequence ID" value="CAB60013.1"/>
    <property type="molecule type" value="Genomic_DNA"/>
</dbReference>
<dbReference type="PIR" id="T39114">
    <property type="entry name" value="T39114"/>
</dbReference>
<dbReference type="RefSeq" id="NP_595016.1">
    <property type="nucleotide sequence ID" value="NM_001020447.2"/>
</dbReference>
<dbReference type="SMR" id="Q9URY6"/>
<dbReference type="BioGRID" id="279584">
    <property type="interactions" value="22"/>
</dbReference>
<dbReference type="FunCoup" id="Q9URY6">
    <property type="interactions" value="66"/>
</dbReference>
<dbReference type="STRING" id="284812.Q9URY6"/>
<dbReference type="PaxDb" id="4896-SPAC869.03c.1"/>
<dbReference type="EnsemblFungi" id="SPAC869.03c.1">
    <property type="protein sequence ID" value="SPAC869.03c.1:pep"/>
    <property type="gene ID" value="SPAC869.03c"/>
</dbReference>
<dbReference type="KEGG" id="spo:2543152"/>
<dbReference type="PomBase" id="SPAC869.03c"/>
<dbReference type="VEuPathDB" id="FungiDB:SPAC869.03c"/>
<dbReference type="eggNOG" id="KOG2348">
    <property type="taxonomic scope" value="Eukaryota"/>
</dbReference>
<dbReference type="HOGENOM" id="CLU_010778_2_1_1"/>
<dbReference type="InParanoid" id="Q9URY6"/>
<dbReference type="OMA" id="VSHYFIC"/>
<dbReference type="PhylomeDB" id="Q9URY6"/>
<dbReference type="PRO" id="PR:Q9URY6"/>
<dbReference type="Proteomes" id="UP000002485">
    <property type="component" value="Chromosome I"/>
</dbReference>
<dbReference type="GO" id="GO:0005737">
    <property type="term" value="C:cytoplasm"/>
    <property type="evidence" value="ECO:0007005"/>
    <property type="project" value="PomBase"/>
</dbReference>
<dbReference type="GO" id="GO:0005794">
    <property type="term" value="C:Golgi apparatus"/>
    <property type="evidence" value="ECO:0007005"/>
    <property type="project" value="PomBase"/>
</dbReference>
<dbReference type="GO" id="GO:0000139">
    <property type="term" value="C:Golgi membrane"/>
    <property type="evidence" value="ECO:0007669"/>
    <property type="project" value="UniProtKB-SubCell"/>
</dbReference>
<dbReference type="GO" id="GO:0005886">
    <property type="term" value="C:plasma membrane"/>
    <property type="evidence" value="ECO:0000318"/>
    <property type="project" value="GO_Central"/>
</dbReference>
<dbReference type="GO" id="GO:0015489">
    <property type="term" value="F:putrescine transmembrane transporter activity"/>
    <property type="evidence" value="ECO:0000318"/>
    <property type="project" value="GO_Central"/>
</dbReference>
<dbReference type="GO" id="GO:0015606">
    <property type="term" value="F:spermidine transmembrane transporter activity"/>
    <property type="evidence" value="ECO:0000318"/>
    <property type="project" value="GO_Central"/>
</dbReference>
<dbReference type="GO" id="GO:0015204">
    <property type="term" value="F:urea transmembrane transporter activity"/>
    <property type="evidence" value="ECO:0000318"/>
    <property type="project" value="GO_Central"/>
</dbReference>
<dbReference type="GO" id="GO:0015847">
    <property type="term" value="P:putrescine transport"/>
    <property type="evidence" value="ECO:0000318"/>
    <property type="project" value="GO_Central"/>
</dbReference>
<dbReference type="GO" id="GO:0015848">
    <property type="term" value="P:spermidine transport"/>
    <property type="evidence" value="ECO:0000318"/>
    <property type="project" value="GO_Central"/>
</dbReference>
<dbReference type="GO" id="GO:0015840">
    <property type="term" value="P:urea transport"/>
    <property type="evidence" value="ECO:0000318"/>
    <property type="project" value="GO_Central"/>
</dbReference>
<dbReference type="CDD" id="cd11476">
    <property type="entry name" value="SLC5sbd_DUR3"/>
    <property type="match status" value="1"/>
</dbReference>
<dbReference type="Gene3D" id="1.20.1730.10">
    <property type="entry name" value="Sodium/glucose cotransporter"/>
    <property type="match status" value="1"/>
</dbReference>
<dbReference type="InterPro" id="IPR031155">
    <property type="entry name" value="DUR"/>
</dbReference>
<dbReference type="InterPro" id="IPR038377">
    <property type="entry name" value="Na/Glc_symporter_sf"/>
</dbReference>
<dbReference type="InterPro" id="IPR001734">
    <property type="entry name" value="Na/solute_symporter"/>
</dbReference>
<dbReference type="NCBIfam" id="TIGR00813">
    <property type="entry name" value="sss"/>
    <property type="match status" value="1"/>
</dbReference>
<dbReference type="PANTHER" id="PTHR46154">
    <property type="match status" value="1"/>
</dbReference>
<dbReference type="PANTHER" id="PTHR46154:SF4">
    <property type="entry name" value="UREA ACTIVE TRANSPORTER"/>
    <property type="match status" value="1"/>
</dbReference>
<dbReference type="Pfam" id="PF00474">
    <property type="entry name" value="SSF"/>
    <property type="match status" value="1"/>
</dbReference>
<dbReference type="PROSITE" id="PS50283">
    <property type="entry name" value="NA_SOLUT_SYMP_3"/>
    <property type="match status" value="1"/>
</dbReference>
<comment type="function">
    <text evidence="1">Involved in active transport of urea.</text>
</comment>
<comment type="subcellular location">
    <subcellularLocation>
        <location evidence="1">Membrane</location>
        <topology evidence="1">Multi-pass membrane protein</topology>
    </subcellularLocation>
    <subcellularLocation>
        <location>Golgi apparatus membrane</location>
        <topology>Multi-pass membrane protein</topology>
    </subcellularLocation>
</comment>
<comment type="similarity">
    <text evidence="3">Belongs to the sodium:solute symporter (SSF) (TC 2.A.21) family.</text>
</comment>
<organism>
    <name type="scientific">Schizosaccharomyces pombe (strain 972 / ATCC 24843)</name>
    <name type="common">Fission yeast</name>
    <dbReference type="NCBI Taxonomy" id="284812"/>
    <lineage>
        <taxon>Eukaryota</taxon>
        <taxon>Fungi</taxon>
        <taxon>Dikarya</taxon>
        <taxon>Ascomycota</taxon>
        <taxon>Taphrinomycotina</taxon>
        <taxon>Schizosaccharomycetes</taxon>
        <taxon>Schizosaccharomycetales</taxon>
        <taxon>Schizosaccharomycetaceae</taxon>
        <taxon>Schizosaccharomyces</taxon>
    </lineage>
</organism>
<keyword id="KW-0333">Golgi apparatus</keyword>
<keyword id="KW-0472">Membrane</keyword>
<keyword id="KW-1185">Reference proteome</keyword>
<keyword id="KW-0812">Transmembrane</keyword>
<keyword id="KW-1133">Transmembrane helix</keyword>
<keyword id="KW-0813">Transport</keyword>
<gene>
    <name type="primary">dur3-3</name>
    <name type="ORF">SPAC869.03c</name>
</gene>
<sequence length="661" mass="71966">MTETVLNQGYGYGIVIGLGFAFAIVMILVTYVLKRYVGEVQDSEHFTTASRSVKTGLISSAVVSSWTWPGTLLTSAGMAYEYGVCGSMWYSFAFTVQITFFTVIALQVKRVAPGAHTIVEIVKARFGQASHAVFLFYALGTNIIVSAMLLLGGSQAISAITGMHVVAAGFLLPLGVWLYTVSGGLKSTFLSDWTHTVIVYIVILITLFVAYTSSVHIGSIDKMYDLLTEVSKTNPSTGYKGSYLTVTNRDAVFVGWNIVIGGFATVFCDPSYGQKAIAAKPISAMKGYFAGGLAWLIVPWAMGSAAALSCLALTNNPVSVTYPDPVSSKQVSEGMPLLYGMTALMGKNGAAAGVLILFMASTSATSAELVAFSSVMTYDVYRNYFRPNASGKELVRVTHVFVTIFAVCMGALAVLFNYIGITISWIITFIGIALGPAVFGITLTLFWKKMNKYGMIIGCPMGSITGVVCWVGSCYKFSNGVVNKTTLNTPYANAVGNFTGLFSGLIYIVLISYFFPNKSDDLNNLNEKFVLGDDATAEEIVDAETEKKQLDRSLRIGIFVSWIIFFILVIIVPLPMYGSKYIFSKLFFRGWIIVIIIWTLIAALYITFYPLYESRDTIVYLCKLAIGKAKAPEPMNYVDAVEVEIESLSDDDKEKKANDFL</sequence>
<name>DUR33_SCHPO</name>
<feature type="chain" id="PRO_0000314768" description="Probable urea active transporter 3">
    <location>
        <begin position="1"/>
        <end position="661"/>
    </location>
</feature>
<feature type="transmembrane region" description="Helical" evidence="2">
    <location>
        <begin position="13"/>
        <end position="33"/>
    </location>
</feature>
<feature type="transmembrane region" description="Helical" evidence="2">
    <location>
        <begin position="56"/>
        <end position="76"/>
    </location>
</feature>
<feature type="transmembrane region" description="Helical" evidence="2">
    <location>
        <begin position="86"/>
        <end position="106"/>
    </location>
</feature>
<feature type="transmembrane region" description="Helical" evidence="2">
    <location>
        <begin position="132"/>
        <end position="152"/>
    </location>
</feature>
<feature type="transmembrane region" description="Helical" evidence="2">
    <location>
        <begin position="165"/>
        <end position="185"/>
    </location>
</feature>
<feature type="transmembrane region" description="Helical" evidence="2">
    <location>
        <begin position="197"/>
        <end position="217"/>
    </location>
</feature>
<feature type="transmembrane region" description="Helical" evidence="2">
    <location>
        <begin position="251"/>
        <end position="271"/>
    </location>
</feature>
<feature type="transmembrane region" description="Helical" evidence="2">
    <location>
        <begin position="288"/>
        <end position="308"/>
    </location>
</feature>
<feature type="transmembrane region" description="Helical" evidence="2">
    <location>
        <begin position="352"/>
        <end position="372"/>
    </location>
</feature>
<feature type="transmembrane region" description="Helical" evidence="2">
    <location>
        <begin position="397"/>
        <end position="417"/>
    </location>
</feature>
<feature type="transmembrane region" description="Helical" evidence="2">
    <location>
        <begin position="419"/>
        <end position="439"/>
    </location>
</feature>
<feature type="transmembrane region" description="Helical" evidence="2">
    <location>
        <begin position="454"/>
        <end position="474"/>
    </location>
</feature>
<feature type="transmembrane region" description="Helical" evidence="2">
    <location>
        <begin position="495"/>
        <end position="515"/>
    </location>
</feature>
<feature type="transmembrane region" description="Helical" evidence="2">
    <location>
        <begin position="556"/>
        <end position="576"/>
    </location>
</feature>
<feature type="transmembrane region" description="Helical" evidence="2">
    <location>
        <begin position="591"/>
        <end position="611"/>
    </location>
</feature>
<reference key="1">
    <citation type="journal article" date="2002" name="Nature">
        <title>The genome sequence of Schizosaccharomyces pombe.</title>
        <authorList>
            <person name="Wood V."/>
            <person name="Gwilliam R."/>
            <person name="Rajandream M.A."/>
            <person name="Lyne M.H."/>
            <person name="Lyne R."/>
            <person name="Stewart A."/>
            <person name="Sgouros J.G."/>
            <person name="Peat N."/>
            <person name="Hayles J."/>
            <person name="Baker S.G."/>
            <person name="Basham D."/>
            <person name="Bowman S."/>
            <person name="Brooks K."/>
            <person name="Brown D."/>
            <person name="Brown S."/>
            <person name="Chillingworth T."/>
            <person name="Churcher C.M."/>
            <person name="Collins M."/>
            <person name="Connor R."/>
            <person name="Cronin A."/>
            <person name="Davis P."/>
            <person name="Feltwell T."/>
            <person name="Fraser A."/>
            <person name="Gentles S."/>
            <person name="Goble A."/>
            <person name="Hamlin N."/>
            <person name="Harris D.E."/>
            <person name="Hidalgo J."/>
            <person name="Hodgson G."/>
            <person name="Holroyd S."/>
            <person name="Hornsby T."/>
            <person name="Howarth S."/>
            <person name="Huckle E.J."/>
            <person name="Hunt S."/>
            <person name="Jagels K."/>
            <person name="James K.D."/>
            <person name="Jones L."/>
            <person name="Jones M."/>
            <person name="Leather S."/>
            <person name="McDonald S."/>
            <person name="McLean J."/>
            <person name="Mooney P."/>
            <person name="Moule S."/>
            <person name="Mungall K.L."/>
            <person name="Murphy L.D."/>
            <person name="Niblett D."/>
            <person name="Odell C."/>
            <person name="Oliver K."/>
            <person name="O'Neil S."/>
            <person name="Pearson D."/>
            <person name="Quail M.A."/>
            <person name="Rabbinowitsch E."/>
            <person name="Rutherford K.M."/>
            <person name="Rutter S."/>
            <person name="Saunders D."/>
            <person name="Seeger K."/>
            <person name="Sharp S."/>
            <person name="Skelton J."/>
            <person name="Simmonds M.N."/>
            <person name="Squares R."/>
            <person name="Squares S."/>
            <person name="Stevens K."/>
            <person name="Taylor K."/>
            <person name="Taylor R.G."/>
            <person name="Tivey A."/>
            <person name="Walsh S.V."/>
            <person name="Warren T."/>
            <person name="Whitehead S."/>
            <person name="Woodward J.R."/>
            <person name="Volckaert G."/>
            <person name="Aert R."/>
            <person name="Robben J."/>
            <person name="Grymonprez B."/>
            <person name="Weltjens I."/>
            <person name="Vanstreels E."/>
            <person name="Rieger M."/>
            <person name="Schaefer M."/>
            <person name="Mueller-Auer S."/>
            <person name="Gabel C."/>
            <person name="Fuchs M."/>
            <person name="Duesterhoeft A."/>
            <person name="Fritzc C."/>
            <person name="Holzer E."/>
            <person name="Moestl D."/>
            <person name="Hilbert H."/>
            <person name="Borzym K."/>
            <person name="Langer I."/>
            <person name="Beck A."/>
            <person name="Lehrach H."/>
            <person name="Reinhardt R."/>
            <person name="Pohl T.M."/>
            <person name="Eger P."/>
            <person name="Zimmermann W."/>
            <person name="Wedler H."/>
            <person name="Wambutt R."/>
            <person name="Purnelle B."/>
            <person name="Goffeau A."/>
            <person name="Cadieu E."/>
            <person name="Dreano S."/>
            <person name="Gloux S."/>
            <person name="Lelaure V."/>
            <person name="Mottier S."/>
            <person name="Galibert F."/>
            <person name="Aves S.J."/>
            <person name="Xiang Z."/>
            <person name="Hunt C."/>
            <person name="Moore K."/>
            <person name="Hurst S.M."/>
            <person name="Lucas M."/>
            <person name="Rochet M."/>
            <person name="Gaillardin C."/>
            <person name="Tallada V.A."/>
            <person name="Garzon A."/>
            <person name="Thode G."/>
            <person name="Daga R.R."/>
            <person name="Cruzado L."/>
            <person name="Jimenez J."/>
            <person name="Sanchez M."/>
            <person name="del Rey F."/>
            <person name="Benito J."/>
            <person name="Dominguez A."/>
            <person name="Revuelta J.L."/>
            <person name="Moreno S."/>
            <person name="Armstrong J."/>
            <person name="Forsburg S.L."/>
            <person name="Cerutti L."/>
            <person name="Lowe T."/>
            <person name="McCombie W.R."/>
            <person name="Paulsen I."/>
            <person name="Potashkin J."/>
            <person name="Shpakovski G.V."/>
            <person name="Ussery D."/>
            <person name="Barrell B.G."/>
            <person name="Nurse P."/>
        </authorList>
    </citation>
    <scope>NUCLEOTIDE SEQUENCE [LARGE SCALE GENOMIC DNA]</scope>
    <source>
        <strain>972 / ATCC 24843</strain>
    </source>
</reference>